<protein>
    <recommendedName>
        <fullName>Guanine nucleotide-binding protein alpha-4 subunit</fullName>
        <shortName>G alpha-4</shortName>
    </recommendedName>
</protein>
<feature type="chain" id="PRO_0000203662" description="Guanine nucleotide-binding protein alpha-4 subunit">
    <location>
        <begin position="1"/>
        <end position="345"/>
    </location>
</feature>
<feature type="domain" description="G-alpha" evidence="2">
    <location>
        <begin position="30"/>
        <end position="345"/>
    </location>
</feature>
<feature type="region of interest" description="G1 motif" evidence="2">
    <location>
        <begin position="33"/>
        <end position="46"/>
    </location>
</feature>
<feature type="region of interest" description="G2 motif" evidence="2">
    <location>
        <begin position="169"/>
        <end position="177"/>
    </location>
</feature>
<feature type="region of interest" description="G3 motif" evidence="2">
    <location>
        <begin position="192"/>
        <end position="201"/>
    </location>
</feature>
<feature type="region of interest" description="G4 motif" evidence="2">
    <location>
        <begin position="261"/>
        <end position="268"/>
    </location>
</feature>
<feature type="region of interest" description="G5 motif" evidence="2">
    <location>
        <begin position="318"/>
        <end position="323"/>
    </location>
</feature>
<feature type="binding site" evidence="1">
    <location>
        <begin position="38"/>
        <end position="45"/>
    </location>
    <ligand>
        <name>GTP</name>
        <dbReference type="ChEBI" id="CHEBI:37565"/>
    </ligand>
</feature>
<feature type="binding site" evidence="1">
    <location>
        <position position="45"/>
    </location>
    <ligand>
        <name>Mg(2+)</name>
        <dbReference type="ChEBI" id="CHEBI:18420"/>
    </ligand>
</feature>
<feature type="binding site" evidence="1">
    <location>
        <begin position="171"/>
        <end position="177"/>
    </location>
    <ligand>
        <name>GTP</name>
        <dbReference type="ChEBI" id="CHEBI:37565"/>
    </ligand>
</feature>
<feature type="binding site" evidence="1">
    <location>
        <position position="177"/>
    </location>
    <ligand>
        <name>Mg(2+)</name>
        <dbReference type="ChEBI" id="CHEBI:18420"/>
    </ligand>
</feature>
<feature type="binding site" evidence="1">
    <location>
        <begin position="196"/>
        <end position="200"/>
    </location>
    <ligand>
        <name>GTP</name>
        <dbReference type="ChEBI" id="CHEBI:37565"/>
    </ligand>
</feature>
<feature type="binding site" evidence="1">
    <location>
        <begin position="265"/>
        <end position="268"/>
    </location>
    <ligand>
        <name>GTP</name>
        <dbReference type="ChEBI" id="CHEBI:37565"/>
    </ligand>
</feature>
<feature type="binding site" evidence="1">
    <location>
        <position position="320"/>
    </location>
    <ligand>
        <name>GTP</name>
        <dbReference type="ChEBI" id="CHEBI:37565"/>
    </ligand>
</feature>
<comment type="function">
    <text>Guanine nucleotide-binding proteins (G proteins) are involved as modulators or transducers in various transmembrane signaling systems. G alpha-4 plays a role in morphogenesis of the multicellular structure.</text>
</comment>
<comment type="subunit">
    <text>G proteins are composed of 3 units; alpha, beta and gamma. The alpha chain contains the guanine nucleotide binding site.</text>
</comment>
<comment type="interaction">
    <interactant intactId="EBI-2905587">
        <id>P34042</id>
    </interactant>
    <interactant intactId="EBI-2905550">
        <id>Q54QB1</id>
        <label>erkB</label>
    </interactant>
    <organismsDiffer>false</organismsDiffer>
    <experiments>2</experiments>
</comment>
<comment type="similarity">
    <text evidence="3">Belongs to the G-alpha family.</text>
</comment>
<sequence>MRFKCFGSEETEQSSKIDKSIETDRRKLRKDVKLLLLGPGESGKSTIFKQMKIIQEDGGYSVEELLEYRAFVYSNCISQMEALLTASAKLNIELEVENKQRAANVLRRTIGNEPWLLLAADIKHLWEDKGIKETYAQKDKHFQLNDSAAYFFDNIDRYMREDFVPNEQDVLRCRVRTTGIQESEFTFDKIRLKIVDVGGQRSQRRKWIHCFDCVTAVIFVAAMSDYDQVLREDESVNRTRESLALFKEIVNCDYFKETPIVLFLNKKDLFKEKLKRVPLQSCFSDYTGPNKYKDAAMFIQSQYLAQGPSPRTIYTHATCAVDTENIKFVFRAVRQTILSQALEHF</sequence>
<reference key="1">
    <citation type="journal article" date="1991" name="Proc. Natl. Acad. Sci. U.S.A.">
        <title>Identification of Dictyostelium G alpha genes expressed during multicellular development.</title>
        <authorList>
            <person name="Hadwiger J.A."/>
            <person name="Wilkie T.M."/>
            <person name="Strathmann M."/>
            <person name="Firtel R.A."/>
        </authorList>
    </citation>
    <scope>NUCLEOTIDE SEQUENCE [GENOMIC DNA]</scope>
</reference>
<reference key="2">
    <citation type="journal article" date="2005" name="Nature">
        <title>The genome of the social amoeba Dictyostelium discoideum.</title>
        <authorList>
            <person name="Eichinger L."/>
            <person name="Pachebat J.A."/>
            <person name="Gloeckner G."/>
            <person name="Rajandream M.A."/>
            <person name="Sucgang R."/>
            <person name="Berriman M."/>
            <person name="Song J."/>
            <person name="Olsen R."/>
            <person name="Szafranski K."/>
            <person name="Xu Q."/>
            <person name="Tunggal B."/>
            <person name="Kummerfeld S."/>
            <person name="Madera M."/>
            <person name="Konfortov B.A."/>
            <person name="Rivero F."/>
            <person name="Bankier A.T."/>
            <person name="Lehmann R."/>
            <person name="Hamlin N."/>
            <person name="Davies R."/>
            <person name="Gaudet P."/>
            <person name="Fey P."/>
            <person name="Pilcher K."/>
            <person name="Chen G."/>
            <person name="Saunders D."/>
            <person name="Sodergren E.J."/>
            <person name="Davis P."/>
            <person name="Kerhornou A."/>
            <person name="Nie X."/>
            <person name="Hall N."/>
            <person name="Anjard C."/>
            <person name="Hemphill L."/>
            <person name="Bason N."/>
            <person name="Farbrother P."/>
            <person name="Desany B."/>
            <person name="Just E."/>
            <person name="Morio T."/>
            <person name="Rost R."/>
            <person name="Churcher C.M."/>
            <person name="Cooper J."/>
            <person name="Haydock S."/>
            <person name="van Driessche N."/>
            <person name="Cronin A."/>
            <person name="Goodhead I."/>
            <person name="Muzny D.M."/>
            <person name="Mourier T."/>
            <person name="Pain A."/>
            <person name="Lu M."/>
            <person name="Harper D."/>
            <person name="Lindsay R."/>
            <person name="Hauser H."/>
            <person name="James K.D."/>
            <person name="Quiles M."/>
            <person name="Madan Babu M."/>
            <person name="Saito T."/>
            <person name="Buchrieser C."/>
            <person name="Wardroper A."/>
            <person name="Felder M."/>
            <person name="Thangavelu M."/>
            <person name="Johnson D."/>
            <person name="Knights A."/>
            <person name="Loulseged H."/>
            <person name="Mungall K.L."/>
            <person name="Oliver K."/>
            <person name="Price C."/>
            <person name="Quail M.A."/>
            <person name="Urushihara H."/>
            <person name="Hernandez J."/>
            <person name="Rabbinowitsch E."/>
            <person name="Steffen D."/>
            <person name="Sanders M."/>
            <person name="Ma J."/>
            <person name="Kohara Y."/>
            <person name="Sharp S."/>
            <person name="Simmonds M.N."/>
            <person name="Spiegler S."/>
            <person name="Tivey A."/>
            <person name="Sugano S."/>
            <person name="White B."/>
            <person name="Walker D."/>
            <person name="Woodward J.R."/>
            <person name="Winckler T."/>
            <person name="Tanaka Y."/>
            <person name="Shaulsky G."/>
            <person name="Schleicher M."/>
            <person name="Weinstock G.M."/>
            <person name="Rosenthal A."/>
            <person name="Cox E.C."/>
            <person name="Chisholm R.L."/>
            <person name="Gibbs R.A."/>
            <person name="Loomis W.F."/>
            <person name="Platzer M."/>
            <person name="Kay R.R."/>
            <person name="Williams J.G."/>
            <person name="Dear P.H."/>
            <person name="Noegel A.A."/>
            <person name="Barrell B.G."/>
            <person name="Kuspa A."/>
        </authorList>
    </citation>
    <scope>NUCLEOTIDE SEQUENCE [LARGE SCALE GENOMIC DNA]</scope>
    <source>
        <strain>AX4</strain>
    </source>
</reference>
<reference key="3">
    <citation type="journal article" date="2006" name="Mol. Cell. Proteomics">
        <title>Proteomics fingerprinting of phagosome maturation and evidence for the role of a Galpha during uptake.</title>
        <authorList>
            <person name="Gotthardt D."/>
            <person name="Blancheteau V."/>
            <person name="Bosserhoff A."/>
            <person name="Ruppert T."/>
            <person name="Delorenzi M."/>
            <person name="Soldati T."/>
        </authorList>
    </citation>
    <scope>IDENTIFICATION BY MASS SPECTROMETRY [LARGE SCALE ANALYSIS]</scope>
    <source>
        <strain>AX2</strain>
    </source>
</reference>
<dbReference type="EMBL" id="S55498">
    <property type="protein sequence ID" value="AAB19793.1"/>
    <property type="molecule type" value="Genomic_DNA"/>
</dbReference>
<dbReference type="EMBL" id="AAFI02000079">
    <property type="protein sequence ID" value="EAL64550.1"/>
    <property type="molecule type" value="Genomic_DNA"/>
</dbReference>
<dbReference type="PIR" id="A40990">
    <property type="entry name" value="A40990"/>
</dbReference>
<dbReference type="RefSeq" id="XP_638196.1">
    <property type="nucleotide sequence ID" value="XM_633104.1"/>
</dbReference>
<dbReference type="SMR" id="P34042"/>
<dbReference type="FunCoup" id="P34042">
    <property type="interactions" value="10"/>
</dbReference>
<dbReference type="IntAct" id="P34042">
    <property type="interactions" value="1"/>
</dbReference>
<dbReference type="STRING" id="44689.P34042"/>
<dbReference type="PaxDb" id="44689-DDB0216411"/>
<dbReference type="EnsemblProtists" id="EAL64550">
    <property type="protein sequence ID" value="EAL64550"/>
    <property type="gene ID" value="DDB_G0285425"/>
</dbReference>
<dbReference type="GeneID" id="8625242"/>
<dbReference type="KEGG" id="ddi:DDB_G0285425"/>
<dbReference type="dictyBase" id="DDB_G0285425">
    <property type="gene designation" value="gpaD"/>
</dbReference>
<dbReference type="VEuPathDB" id="AmoebaDB:DDB_G0285425"/>
<dbReference type="eggNOG" id="KOG0082">
    <property type="taxonomic scope" value="Eukaryota"/>
</dbReference>
<dbReference type="HOGENOM" id="CLU_014184_6_0_1"/>
<dbReference type="InParanoid" id="P34042"/>
<dbReference type="OMA" id="ANSHWFK"/>
<dbReference type="PhylomeDB" id="P34042"/>
<dbReference type="Reactome" id="R-DDI-112043">
    <property type="pathway name" value="PLC beta mediated events"/>
</dbReference>
<dbReference type="Reactome" id="R-DDI-170660">
    <property type="pathway name" value="Adenylate cyclase activating pathway"/>
</dbReference>
<dbReference type="Reactome" id="R-DDI-170670">
    <property type="pathway name" value="Adenylate cyclase inhibitory pathway"/>
</dbReference>
<dbReference type="Reactome" id="R-DDI-202040">
    <property type="pathway name" value="G-protein activation"/>
</dbReference>
<dbReference type="Reactome" id="R-DDI-399997">
    <property type="pathway name" value="Acetylcholine regulates insulin secretion"/>
</dbReference>
<dbReference type="Reactome" id="R-DDI-416476">
    <property type="pathway name" value="G alpha (q) signalling events"/>
</dbReference>
<dbReference type="Reactome" id="R-DDI-416482">
    <property type="pathway name" value="G alpha (12/13) signalling events"/>
</dbReference>
<dbReference type="Reactome" id="R-DDI-418592">
    <property type="pathway name" value="ADP signalling through P2Y purinoceptor 1"/>
</dbReference>
<dbReference type="Reactome" id="R-DDI-434316">
    <property type="pathway name" value="Fatty Acids bound to GPR40 (FFAR1) regulate insulin secretion"/>
</dbReference>
<dbReference type="Reactome" id="R-DDI-9013148">
    <property type="pathway name" value="CDC42 GTPase cycle"/>
</dbReference>
<dbReference type="Reactome" id="R-DDI-9013149">
    <property type="pathway name" value="RAC1 GTPase cycle"/>
</dbReference>
<dbReference type="Reactome" id="R-DDI-9856530">
    <property type="pathway name" value="High laminar flow shear stress activates signaling by PIEZO1 and PECAM1:CDH5:KDR in endothelial cells"/>
</dbReference>
<dbReference type="PRO" id="PR:P34042"/>
<dbReference type="Proteomes" id="UP000002195">
    <property type="component" value="Chromosome 4"/>
</dbReference>
<dbReference type="GO" id="GO:0005737">
    <property type="term" value="C:cytoplasm"/>
    <property type="evidence" value="ECO:0000318"/>
    <property type="project" value="GO_Central"/>
</dbReference>
<dbReference type="GO" id="GO:0005834">
    <property type="term" value="C:heterotrimeric G-protein complex"/>
    <property type="evidence" value="ECO:0000318"/>
    <property type="project" value="GO_Central"/>
</dbReference>
<dbReference type="GO" id="GO:0045335">
    <property type="term" value="C:phagocytic vesicle"/>
    <property type="evidence" value="ECO:0007005"/>
    <property type="project" value="dictyBase"/>
</dbReference>
<dbReference type="GO" id="GO:0005886">
    <property type="term" value="C:plasma membrane"/>
    <property type="evidence" value="ECO:0000304"/>
    <property type="project" value="dictyBase"/>
</dbReference>
<dbReference type="GO" id="GO:0001664">
    <property type="term" value="F:G protein-coupled receptor binding"/>
    <property type="evidence" value="ECO:0000318"/>
    <property type="project" value="GO_Central"/>
</dbReference>
<dbReference type="GO" id="GO:0031683">
    <property type="term" value="F:G-protein beta/gamma-subunit complex binding"/>
    <property type="evidence" value="ECO:0000318"/>
    <property type="project" value="GO_Central"/>
</dbReference>
<dbReference type="GO" id="GO:0005525">
    <property type="term" value="F:GTP binding"/>
    <property type="evidence" value="ECO:0007669"/>
    <property type="project" value="UniProtKB-KW"/>
</dbReference>
<dbReference type="GO" id="GO:0003924">
    <property type="term" value="F:GTPase activity"/>
    <property type="evidence" value="ECO:0000318"/>
    <property type="project" value="GO_Central"/>
</dbReference>
<dbReference type="GO" id="GO:0046872">
    <property type="term" value="F:metal ion binding"/>
    <property type="evidence" value="ECO:0007669"/>
    <property type="project" value="UniProtKB-KW"/>
</dbReference>
<dbReference type="GO" id="GO:0051019">
    <property type="term" value="F:mitogen-activated protein kinase binding"/>
    <property type="evidence" value="ECO:0000353"/>
    <property type="project" value="dictyBase"/>
</dbReference>
<dbReference type="GO" id="GO:0030295">
    <property type="term" value="F:protein kinase activator activity"/>
    <property type="evidence" value="ECO:0000314"/>
    <property type="project" value="dictyBase"/>
</dbReference>
<dbReference type="GO" id="GO:0019887">
    <property type="term" value="F:protein kinase regulator activity"/>
    <property type="evidence" value="ECO:0000315"/>
    <property type="project" value="dictyBase"/>
</dbReference>
<dbReference type="GO" id="GO:0007188">
    <property type="term" value="P:adenylate cyclase-modulating G protein-coupled receptor signaling pathway"/>
    <property type="evidence" value="ECO:0000318"/>
    <property type="project" value="GO_Central"/>
</dbReference>
<dbReference type="GO" id="GO:0031152">
    <property type="term" value="P:aggregation involved in sorocarp development"/>
    <property type="evidence" value="ECO:0000304"/>
    <property type="project" value="dictyBase"/>
</dbReference>
<dbReference type="GO" id="GO:0006935">
    <property type="term" value="P:chemotaxis"/>
    <property type="evidence" value="ECO:0000304"/>
    <property type="project" value="dictyBase"/>
</dbReference>
<dbReference type="GO" id="GO:0043326">
    <property type="term" value="P:chemotaxis to folate"/>
    <property type="evidence" value="ECO:0000315"/>
    <property type="project" value="dictyBase"/>
</dbReference>
<dbReference type="GO" id="GO:0000165">
    <property type="term" value="P:MAPK cascade"/>
    <property type="evidence" value="ECO:0000315"/>
    <property type="project" value="dictyBase"/>
</dbReference>
<dbReference type="GO" id="GO:0008104">
    <property type="term" value="P:protein localization"/>
    <property type="evidence" value="ECO:0000315"/>
    <property type="project" value="dictyBase"/>
</dbReference>
<dbReference type="GO" id="GO:1905301">
    <property type="term" value="P:regulation of macropinocytosis"/>
    <property type="evidence" value="ECO:0000315"/>
    <property type="project" value="dictyBase"/>
</dbReference>
<dbReference type="GO" id="GO:0030435">
    <property type="term" value="P:sporulation resulting in formation of a cellular spore"/>
    <property type="evidence" value="ECO:0000303"/>
    <property type="project" value="dictyBase"/>
</dbReference>
<dbReference type="CDD" id="cd00066">
    <property type="entry name" value="G-alpha"/>
    <property type="match status" value="1"/>
</dbReference>
<dbReference type="FunFam" id="3.40.50.300:FF:002307">
    <property type="entry name" value="Guanine nucleotide-binding protein G(k) subunit alpha"/>
    <property type="match status" value="1"/>
</dbReference>
<dbReference type="FunFam" id="1.10.400.10:FF:000007">
    <property type="entry name" value="Guanine nucleotide-binding protein subunit alpha"/>
    <property type="match status" value="1"/>
</dbReference>
<dbReference type="Gene3D" id="1.10.400.10">
    <property type="entry name" value="GI Alpha 1, domain 2-like"/>
    <property type="match status" value="1"/>
</dbReference>
<dbReference type="Gene3D" id="3.40.50.300">
    <property type="entry name" value="P-loop containing nucleotide triphosphate hydrolases"/>
    <property type="match status" value="1"/>
</dbReference>
<dbReference type="InterPro" id="IPR001019">
    <property type="entry name" value="Gprotein_alpha_su"/>
</dbReference>
<dbReference type="InterPro" id="IPR011025">
    <property type="entry name" value="GproteinA_insert"/>
</dbReference>
<dbReference type="InterPro" id="IPR027417">
    <property type="entry name" value="P-loop_NTPase"/>
</dbReference>
<dbReference type="PANTHER" id="PTHR10218">
    <property type="entry name" value="GTP-BINDING PROTEIN ALPHA SUBUNIT"/>
    <property type="match status" value="1"/>
</dbReference>
<dbReference type="PANTHER" id="PTHR10218:SF180">
    <property type="entry name" value="GUANINE NUCLEOTIDE-BINDING PROTEIN ALPHA-4 SUBUNIT-RELATED"/>
    <property type="match status" value="1"/>
</dbReference>
<dbReference type="Pfam" id="PF00503">
    <property type="entry name" value="G-alpha"/>
    <property type="match status" value="1"/>
</dbReference>
<dbReference type="PRINTS" id="PR00318">
    <property type="entry name" value="GPROTEINA"/>
</dbReference>
<dbReference type="SMART" id="SM00275">
    <property type="entry name" value="G_alpha"/>
    <property type="match status" value="1"/>
</dbReference>
<dbReference type="SUPFAM" id="SSF52540">
    <property type="entry name" value="P-loop containing nucleoside triphosphate hydrolases"/>
    <property type="match status" value="1"/>
</dbReference>
<dbReference type="SUPFAM" id="SSF47895">
    <property type="entry name" value="Transducin (alpha subunit), insertion domain"/>
    <property type="match status" value="1"/>
</dbReference>
<dbReference type="PROSITE" id="PS51882">
    <property type="entry name" value="G_ALPHA"/>
    <property type="match status" value="1"/>
</dbReference>
<accession>P34042</accession>
<accession>Q54MU7</accession>
<evidence type="ECO:0000250" key="1"/>
<evidence type="ECO:0000255" key="2">
    <source>
        <dbReference type="PROSITE-ProRule" id="PRU01230"/>
    </source>
</evidence>
<evidence type="ECO:0000305" key="3"/>
<name>GPA4_DICDI</name>
<gene>
    <name type="primary">gpaD</name>
    <name type="ORF">DDB_G0285425</name>
</gene>
<organism>
    <name type="scientific">Dictyostelium discoideum</name>
    <name type="common">Social amoeba</name>
    <dbReference type="NCBI Taxonomy" id="44689"/>
    <lineage>
        <taxon>Eukaryota</taxon>
        <taxon>Amoebozoa</taxon>
        <taxon>Evosea</taxon>
        <taxon>Eumycetozoa</taxon>
        <taxon>Dictyostelia</taxon>
        <taxon>Dictyosteliales</taxon>
        <taxon>Dictyosteliaceae</taxon>
        <taxon>Dictyostelium</taxon>
    </lineage>
</organism>
<keyword id="KW-0342">GTP-binding</keyword>
<keyword id="KW-0460">Magnesium</keyword>
<keyword id="KW-0479">Metal-binding</keyword>
<keyword id="KW-0547">Nucleotide-binding</keyword>
<keyword id="KW-1185">Reference proteome</keyword>
<keyword id="KW-0807">Transducer</keyword>
<proteinExistence type="evidence at protein level"/>